<comment type="function">
    <text evidence="1">Part of the ABC transporter complex MetNIQ involved in methionine import. Responsible for energy coupling to the transport system.</text>
</comment>
<comment type="catalytic activity">
    <reaction evidence="1">
        <text>L-methionine(out) + ATP + H2O = L-methionine(in) + ADP + phosphate + H(+)</text>
        <dbReference type="Rhea" id="RHEA:29779"/>
        <dbReference type="ChEBI" id="CHEBI:15377"/>
        <dbReference type="ChEBI" id="CHEBI:15378"/>
        <dbReference type="ChEBI" id="CHEBI:30616"/>
        <dbReference type="ChEBI" id="CHEBI:43474"/>
        <dbReference type="ChEBI" id="CHEBI:57844"/>
        <dbReference type="ChEBI" id="CHEBI:456216"/>
        <dbReference type="EC" id="7.4.2.11"/>
    </reaction>
</comment>
<comment type="catalytic activity">
    <reaction evidence="1">
        <text>D-methionine(out) + ATP + H2O = D-methionine(in) + ADP + phosphate + H(+)</text>
        <dbReference type="Rhea" id="RHEA:29767"/>
        <dbReference type="ChEBI" id="CHEBI:15377"/>
        <dbReference type="ChEBI" id="CHEBI:15378"/>
        <dbReference type="ChEBI" id="CHEBI:30616"/>
        <dbReference type="ChEBI" id="CHEBI:43474"/>
        <dbReference type="ChEBI" id="CHEBI:57932"/>
        <dbReference type="ChEBI" id="CHEBI:456216"/>
        <dbReference type="EC" id="7.4.2.11"/>
    </reaction>
</comment>
<comment type="subunit">
    <text evidence="1">The complex is composed of two ATP-binding proteins (MetN), two transmembrane proteins (MetI) and a solute-binding protein (MetQ).</text>
</comment>
<comment type="subcellular location">
    <subcellularLocation>
        <location evidence="1">Cell membrane</location>
        <topology evidence="1">Peripheral membrane protein</topology>
    </subcellularLocation>
</comment>
<comment type="similarity">
    <text evidence="1">Belongs to the ABC transporter superfamily. Methionine importer (TC 3.A.1.24) family.</text>
</comment>
<name>METN1_BACHK</name>
<reference key="1">
    <citation type="journal article" date="2006" name="J. Bacteriol.">
        <title>Pathogenomic sequence analysis of Bacillus cereus and Bacillus thuringiensis isolates closely related to Bacillus anthracis.</title>
        <authorList>
            <person name="Han C.S."/>
            <person name="Xie G."/>
            <person name="Challacombe J.F."/>
            <person name="Altherr M.R."/>
            <person name="Bhotika S.S."/>
            <person name="Bruce D."/>
            <person name="Campbell C.S."/>
            <person name="Campbell M.L."/>
            <person name="Chen J."/>
            <person name="Chertkov O."/>
            <person name="Cleland C."/>
            <person name="Dimitrijevic M."/>
            <person name="Doggett N.A."/>
            <person name="Fawcett J.J."/>
            <person name="Glavina T."/>
            <person name="Goodwin L.A."/>
            <person name="Hill K.K."/>
            <person name="Hitchcock P."/>
            <person name="Jackson P.J."/>
            <person name="Keim P."/>
            <person name="Kewalramani A.R."/>
            <person name="Longmire J."/>
            <person name="Lucas S."/>
            <person name="Malfatti S."/>
            <person name="McMurry K."/>
            <person name="Meincke L.J."/>
            <person name="Misra M."/>
            <person name="Moseman B.L."/>
            <person name="Mundt M."/>
            <person name="Munk A.C."/>
            <person name="Okinaka R.T."/>
            <person name="Parson-Quintana B."/>
            <person name="Reilly L.P."/>
            <person name="Richardson P."/>
            <person name="Robinson D.L."/>
            <person name="Rubin E."/>
            <person name="Saunders E."/>
            <person name="Tapia R."/>
            <person name="Tesmer J.G."/>
            <person name="Thayer N."/>
            <person name="Thompson L.S."/>
            <person name="Tice H."/>
            <person name="Ticknor L.O."/>
            <person name="Wills P.L."/>
            <person name="Brettin T.S."/>
            <person name="Gilna P."/>
        </authorList>
    </citation>
    <scope>NUCLEOTIDE SEQUENCE [LARGE SCALE GENOMIC DNA]</scope>
    <source>
        <strain>97-27</strain>
    </source>
</reference>
<gene>
    <name evidence="1" type="primary">metN1</name>
    <name type="ordered locus">BT9727_0281</name>
</gene>
<evidence type="ECO:0000255" key="1">
    <source>
        <dbReference type="HAMAP-Rule" id="MF_01719"/>
    </source>
</evidence>
<organism>
    <name type="scientific">Bacillus thuringiensis subsp. konkukian (strain 97-27)</name>
    <dbReference type="NCBI Taxonomy" id="281309"/>
    <lineage>
        <taxon>Bacteria</taxon>
        <taxon>Bacillati</taxon>
        <taxon>Bacillota</taxon>
        <taxon>Bacilli</taxon>
        <taxon>Bacillales</taxon>
        <taxon>Bacillaceae</taxon>
        <taxon>Bacillus</taxon>
        <taxon>Bacillus cereus group</taxon>
    </lineage>
</organism>
<dbReference type="EC" id="7.4.2.11" evidence="1"/>
<dbReference type="EMBL" id="AE017355">
    <property type="protein sequence ID" value="AAT61271.1"/>
    <property type="molecule type" value="Genomic_DNA"/>
</dbReference>
<dbReference type="RefSeq" id="WP_000622979.1">
    <property type="nucleotide sequence ID" value="NC_005957.1"/>
</dbReference>
<dbReference type="RefSeq" id="YP_034631.1">
    <property type="nucleotide sequence ID" value="NC_005957.1"/>
</dbReference>
<dbReference type="SMR" id="Q6HP89"/>
<dbReference type="KEGG" id="btk:BT9727_0281"/>
<dbReference type="PATRIC" id="fig|281309.8.peg.300"/>
<dbReference type="HOGENOM" id="CLU_000604_1_3_9"/>
<dbReference type="Proteomes" id="UP000001301">
    <property type="component" value="Chromosome"/>
</dbReference>
<dbReference type="GO" id="GO:0005886">
    <property type="term" value="C:plasma membrane"/>
    <property type="evidence" value="ECO:0007669"/>
    <property type="project" value="UniProtKB-SubCell"/>
</dbReference>
<dbReference type="GO" id="GO:0033232">
    <property type="term" value="F:ABC-type D-methionine transporter activity"/>
    <property type="evidence" value="ECO:0007669"/>
    <property type="project" value="UniProtKB-EC"/>
</dbReference>
<dbReference type="GO" id="GO:0005524">
    <property type="term" value="F:ATP binding"/>
    <property type="evidence" value="ECO:0007669"/>
    <property type="project" value="UniProtKB-KW"/>
</dbReference>
<dbReference type="GO" id="GO:0016887">
    <property type="term" value="F:ATP hydrolysis activity"/>
    <property type="evidence" value="ECO:0007669"/>
    <property type="project" value="InterPro"/>
</dbReference>
<dbReference type="CDD" id="cd03258">
    <property type="entry name" value="ABC_MetN_methionine_transporter"/>
    <property type="match status" value="1"/>
</dbReference>
<dbReference type="FunFam" id="3.40.50.300:FF:000233">
    <property type="entry name" value="Methionine import ATP-binding protein MetN"/>
    <property type="match status" value="1"/>
</dbReference>
<dbReference type="Gene3D" id="3.30.70.260">
    <property type="match status" value="1"/>
</dbReference>
<dbReference type="Gene3D" id="3.40.50.300">
    <property type="entry name" value="P-loop containing nucleotide triphosphate hydrolases"/>
    <property type="match status" value="1"/>
</dbReference>
<dbReference type="InterPro" id="IPR003593">
    <property type="entry name" value="AAA+_ATPase"/>
</dbReference>
<dbReference type="InterPro" id="IPR003439">
    <property type="entry name" value="ABC_transporter-like_ATP-bd"/>
</dbReference>
<dbReference type="InterPro" id="IPR017871">
    <property type="entry name" value="ABC_transporter-like_CS"/>
</dbReference>
<dbReference type="InterPro" id="IPR045865">
    <property type="entry name" value="ACT-like_dom_sf"/>
</dbReference>
<dbReference type="InterPro" id="IPR041701">
    <property type="entry name" value="MetN_ABC"/>
</dbReference>
<dbReference type="InterPro" id="IPR050086">
    <property type="entry name" value="MetN_ABC_transporter-like"/>
</dbReference>
<dbReference type="InterPro" id="IPR018449">
    <property type="entry name" value="NIL_domain"/>
</dbReference>
<dbReference type="InterPro" id="IPR027417">
    <property type="entry name" value="P-loop_NTPase"/>
</dbReference>
<dbReference type="PANTHER" id="PTHR43166">
    <property type="entry name" value="AMINO ACID IMPORT ATP-BINDING PROTEIN"/>
    <property type="match status" value="1"/>
</dbReference>
<dbReference type="PANTHER" id="PTHR43166:SF30">
    <property type="entry name" value="METHIONINE IMPORT ATP-BINDING PROTEIN METN"/>
    <property type="match status" value="1"/>
</dbReference>
<dbReference type="Pfam" id="PF00005">
    <property type="entry name" value="ABC_tran"/>
    <property type="match status" value="1"/>
</dbReference>
<dbReference type="Pfam" id="PF09383">
    <property type="entry name" value="NIL"/>
    <property type="match status" value="1"/>
</dbReference>
<dbReference type="SMART" id="SM00382">
    <property type="entry name" value="AAA"/>
    <property type="match status" value="1"/>
</dbReference>
<dbReference type="SMART" id="SM00930">
    <property type="entry name" value="NIL"/>
    <property type="match status" value="1"/>
</dbReference>
<dbReference type="SUPFAM" id="SSF55021">
    <property type="entry name" value="ACT-like"/>
    <property type="match status" value="1"/>
</dbReference>
<dbReference type="SUPFAM" id="SSF52540">
    <property type="entry name" value="P-loop containing nucleoside triphosphate hydrolases"/>
    <property type="match status" value="1"/>
</dbReference>
<dbReference type="PROSITE" id="PS00211">
    <property type="entry name" value="ABC_TRANSPORTER_1"/>
    <property type="match status" value="1"/>
</dbReference>
<dbReference type="PROSITE" id="PS50893">
    <property type="entry name" value="ABC_TRANSPORTER_2"/>
    <property type="match status" value="1"/>
</dbReference>
<dbReference type="PROSITE" id="PS51264">
    <property type="entry name" value="METN"/>
    <property type="match status" value="1"/>
</dbReference>
<feature type="chain" id="PRO_0000270248" description="Methionine import ATP-binding protein MetN 1">
    <location>
        <begin position="1"/>
        <end position="339"/>
    </location>
</feature>
<feature type="domain" description="ABC transporter" evidence="1">
    <location>
        <begin position="2"/>
        <end position="241"/>
    </location>
</feature>
<feature type="binding site" evidence="1">
    <location>
        <begin position="38"/>
        <end position="45"/>
    </location>
    <ligand>
        <name>ATP</name>
        <dbReference type="ChEBI" id="CHEBI:30616"/>
    </ligand>
</feature>
<proteinExistence type="inferred from homology"/>
<accession>Q6HP89</accession>
<keyword id="KW-0029">Amino-acid transport</keyword>
<keyword id="KW-0067">ATP-binding</keyword>
<keyword id="KW-1003">Cell membrane</keyword>
<keyword id="KW-0472">Membrane</keyword>
<keyword id="KW-0547">Nucleotide-binding</keyword>
<keyword id="KW-1278">Translocase</keyword>
<keyword id="KW-0813">Transport</keyword>
<protein>
    <recommendedName>
        <fullName evidence="1">Methionine import ATP-binding protein MetN 1</fullName>
        <ecNumber evidence="1">7.4.2.11</ecNumber>
    </recommendedName>
</protein>
<sequence>MISFNNVSKVYESGGQSVHAVEDVTLSVEKGEIFGIIGFSGAGKSTLLRLVNMLERPTAGTISIDDKDITSLSTKELRKLRQRIGMIFQSFNLFNSRTVFGNIAYPLKLAKVPKNEIKERVNELLKFVGLEDKANNYPEQLSGGQKQRVGIARALATSPDILICDEATSALDPETTTEILNLLKKVNREYNLTILLITHEMHVVKEICHRVAVMEKGKVIEEGKLFDVFTQPKTKTTQNFVRSVINDHLPESVLAKIQNGGQIYRLTFTGEETGQPVLSYIAKNYNVDVNVLYGNIIELQNVLFGNLLVELQGEQREIQKALQHLRLQVQLKEVEAHAS</sequence>